<gene>
    <name evidence="1" type="primary">tig</name>
    <name type="ordered locus">RD1_3049</name>
</gene>
<comment type="function">
    <text evidence="1">Involved in protein export. Acts as a chaperone by maintaining the newly synthesized protein in an open conformation. Functions as a peptidyl-prolyl cis-trans isomerase.</text>
</comment>
<comment type="catalytic activity">
    <reaction evidence="1">
        <text>[protein]-peptidylproline (omega=180) = [protein]-peptidylproline (omega=0)</text>
        <dbReference type="Rhea" id="RHEA:16237"/>
        <dbReference type="Rhea" id="RHEA-COMP:10747"/>
        <dbReference type="Rhea" id="RHEA-COMP:10748"/>
        <dbReference type="ChEBI" id="CHEBI:83833"/>
        <dbReference type="ChEBI" id="CHEBI:83834"/>
        <dbReference type="EC" id="5.2.1.8"/>
    </reaction>
</comment>
<comment type="subcellular location">
    <subcellularLocation>
        <location>Cytoplasm</location>
    </subcellularLocation>
    <text evidence="1">About half TF is bound to the ribosome near the polypeptide exit tunnel while the other half is free in the cytoplasm.</text>
</comment>
<comment type="domain">
    <text evidence="1">Consists of 3 domains; the N-terminus binds the ribosome, the middle domain has PPIase activity, while the C-terminus has intrinsic chaperone activity on its own.</text>
</comment>
<comment type="similarity">
    <text evidence="1">Belongs to the FKBP-type PPIase family. Tig subfamily.</text>
</comment>
<dbReference type="EC" id="5.2.1.8" evidence="1"/>
<dbReference type="EMBL" id="CP000362">
    <property type="protein sequence ID" value="ABG32562.1"/>
    <property type="molecule type" value="Genomic_DNA"/>
</dbReference>
<dbReference type="RefSeq" id="WP_011569178.1">
    <property type="nucleotide sequence ID" value="NC_008209.1"/>
</dbReference>
<dbReference type="SMR" id="Q164N1"/>
<dbReference type="STRING" id="375451.RD1_3049"/>
<dbReference type="KEGG" id="rde:RD1_3049"/>
<dbReference type="eggNOG" id="COG0544">
    <property type="taxonomic scope" value="Bacteria"/>
</dbReference>
<dbReference type="HOGENOM" id="CLU_033058_2_2_5"/>
<dbReference type="OrthoDB" id="9767721at2"/>
<dbReference type="Proteomes" id="UP000007029">
    <property type="component" value="Chromosome"/>
</dbReference>
<dbReference type="GO" id="GO:0005737">
    <property type="term" value="C:cytoplasm"/>
    <property type="evidence" value="ECO:0007669"/>
    <property type="project" value="UniProtKB-SubCell"/>
</dbReference>
<dbReference type="GO" id="GO:0003755">
    <property type="term" value="F:peptidyl-prolyl cis-trans isomerase activity"/>
    <property type="evidence" value="ECO:0007669"/>
    <property type="project" value="UniProtKB-UniRule"/>
</dbReference>
<dbReference type="GO" id="GO:0051301">
    <property type="term" value="P:cell division"/>
    <property type="evidence" value="ECO:0007669"/>
    <property type="project" value="UniProtKB-KW"/>
</dbReference>
<dbReference type="GO" id="GO:0006457">
    <property type="term" value="P:protein folding"/>
    <property type="evidence" value="ECO:0007669"/>
    <property type="project" value="UniProtKB-UniRule"/>
</dbReference>
<dbReference type="GO" id="GO:0015031">
    <property type="term" value="P:protein transport"/>
    <property type="evidence" value="ECO:0007669"/>
    <property type="project" value="UniProtKB-UniRule"/>
</dbReference>
<dbReference type="FunFam" id="3.10.50.40:FF:000001">
    <property type="entry name" value="Trigger factor"/>
    <property type="match status" value="1"/>
</dbReference>
<dbReference type="Gene3D" id="3.10.50.40">
    <property type="match status" value="1"/>
</dbReference>
<dbReference type="Gene3D" id="3.30.70.1050">
    <property type="entry name" value="Trigger factor ribosome-binding domain"/>
    <property type="match status" value="1"/>
</dbReference>
<dbReference type="Gene3D" id="1.10.3120.10">
    <property type="entry name" value="Trigger factor, C-terminal domain"/>
    <property type="match status" value="1"/>
</dbReference>
<dbReference type="HAMAP" id="MF_00303">
    <property type="entry name" value="Trigger_factor_Tig"/>
    <property type="match status" value="1"/>
</dbReference>
<dbReference type="InterPro" id="IPR046357">
    <property type="entry name" value="PPIase_dom_sf"/>
</dbReference>
<dbReference type="InterPro" id="IPR001179">
    <property type="entry name" value="PPIase_FKBP_dom"/>
</dbReference>
<dbReference type="InterPro" id="IPR005215">
    <property type="entry name" value="Trig_fac"/>
</dbReference>
<dbReference type="InterPro" id="IPR008880">
    <property type="entry name" value="Trigger_fac_C"/>
</dbReference>
<dbReference type="InterPro" id="IPR037041">
    <property type="entry name" value="Trigger_fac_C_sf"/>
</dbReference>
<dbReference type="InterPro" id="IPR008881">
    <property type="entry name" value="Trigger_fac_ribosome-bd_bac"/>
</dbReference>
<dbReference type="InterPro" id="IPR036611">
    <property type="entry name" value="Trigger_fac_ribosome-bd_sf"/>
</dbReference>
<dbReference type="InterPro" id="IPR027304">
    <property type="entry name" value="Trigger_fact/SurA_dom_sf"/>
</dbReference>
<dbReference type="NCBIfam" id="TIGR00115">
    <property type="entry name" value="tig"/>
    <property type="match status" value="1"/>
</dbReference>
<dbReference type="Pfam" id="PF00254">
    <property type="entry name" value="FKBP_C"/>
    <property type="match status" value="1"/>
</dbReference>
<dbReference type="Pfam" id="PF05698">
    <property type="entry name" value="Trigger_C"/>
    <property type="match status" value="1"/>
</dbReference>
<dbReference type="Pfam" id="PF05697">
    <property type="entry name" value="Trigger_N"/>
    <property type="match status" value="1"/>
</dbReference>
<dbReference type="PIRSF" id="PIRSF003095">
    <property type="entry name" value="Trigger_factor"/>
    <property type="match status" value="1"/>
</dbReference>
<dbReference type="SUPFAM" id="SSF54534">
    <property type="entry name" value="FKBP-like"/>
    <property type="match status" value="1"/>
</dbReference>
<dbReference type="SUPFAM" id="SSF109998">
    <property type="entry name" value="Triger factor/SurA peptide-binding domain-like"/>
    <property type="match status" value="1"/>
</dbReference>
<dbReference type="SUPFAM" id="SSF102735">
    <property type="entry name" value="Trigger factor ribosome-binding domain"/>
    <property type="match status" value="1"/>
</dbReference>
<dbReference type="PROSITE" id="PS50059">
    <property type="entry name" value="FKBP_PPIASE"/>
    <property type="match status" value="1"/>
</dbReference>
<reference key="1">
    <citation type="journal article" date="2007" name="J. Bacteriol.">
        <title>The complete genome sequence of Roseobacter denitrificans reveals a mixotrophic rather than photosynthetic metabolism.</title>
        <authorList>
            <person name="Swingley W.D."/>
            <person name="Sadekar S."/>
            <person name="Mastrian S.D."/>
            <person name="Matthies H.J."/>
            <person name="Hao J."/>
            <person name="Ramos H."/>
            <person name="Acharya C.R."/>
            <person name="Conrad A.L."/>
            <person name="Taylor H.L."/>
            <person name="Dejesa L.C."/>
            <person name="Shah M.K."/>
            <person name="O'Huallachain M.E."/>
            <person name="Lince M.T."/>
            <person name="Blankenship R.E."/>
            <person name="Beatty J.T."/>
            <person name="Touchman J.W."/>
        </authorList>
    </citation>
    <scope>NUCLEOTIDE SEQUENCE [LARGE SCALE GENOMIC DNA]</scope>
    <source>
        <strain>ATCC 33942 / OCh 114</strain>
    </source>
</reference>
<accession>Q164N1</accession>
<sequence length="443" mass="48903">MQVTETLNEGLKRGYAIKVTAAELDAKVNEKLAEAQPEVEMKGFRKGKVPMALLKKQFGQKVMGEAMQESIDGAMNDHFTSSGDRPAMQPEVKMTNENWKEGDDIEVSMSYEALPDIPDVDFSAIELERMTVKADDAAIDEALGSLAETAQNFENRKKGSKAKDGDQIVMDFLGKVDGEAFDGGAAEDYPLVLGSNSFIPGFEEQLVGVKAGEEKAVTVTFPENYQAENLAGKEAVFECTVKEVKKPVPAEIDDELAKKFGAEDLAALKGQIAERLEAEYAGAARAIMKRSLLDALDDIVDFDLPPSLVSAEAGQIAHQLWHEENPDVQGHDHPEITPTEEHTKLAERRVRLGLLLADIGQKAKVEVTDAEMSQAIMNQARQYPGQERQFFEFVQQNQQMQQQMRAPIFEDKVVDHVFAGAKVTEKEVSKDDLQKAVEALEEE</sequence>
<feature type="chain" id="PRO_0000256610" description="Trigger factor">
    <location>
        <begin position="1"/>
        <end position="443"/>
    </location>
</feature>
<feature type="domain" description="PPIase FKBP-type" evidence="1">
    <location>
        <begin position="165"/>
        <end position="250"/>
    </location>
</feature>
<organism>
    <name type="scientific">Roseobacter denitrificans (strain ATCC 33942 / OCh 114)</name>
    <name type="common">Erythrobacter sp. (strain OCh 114)</name>
    <name type="synonym">Roseobacter denitrificans</name>
    <dbReference type="NCBI Taxonomy" id="375451"/>
    <lineage>
        <taxon>Bacteria</taxon>
        <taxon>Pseudomonadati</taxon>
        <taxon>Pseudomonadota</taxon>
        <taxon>Alphaproteobacteria</taxon>
        <taxon>Rhodobacterales</taxon>
        <taxon>Roseobacteraceae</taxon>
        <taxon>Roseobacter</taxon>
    </lineage>
</organism>
<evidence type="ECO:0000255" key="1">
    <source>
        <dbReference type="HAMAP-Rule" id="MF_00303"/>
    </source>
</evidence>
<protein>
    <recommendedName>
        <fullName evidence="1">Trigger factor</fullName>
        <shortName evidence="1">TF</shortName>
        <ecNumber evidence="1">5.2.1.8</ecNumber>
    </recommendedName>
    <alternativeName>
        <fullName evidence="1">PPIase</fullName>
    </alternativeName>
</protein>
<name>TIG_ROSDO</name>
<keyword id="KW-0131">Cell cycle</keyword>
<keyword id="KW-0132">Cell division</keyword>
<keyword id="KW-0143">Chaperone</keyword>
<keyword id="KW-0963">Cytoplasm</keyword>
<keyword id="KW-0413">Isomerase</keyword>
<keyword id="KW-1185">Reference proteome</keyword>
<keyword id="KW-0697">Rotamase</keyword>
<proteinExistence type="inferred from homology"/>